<sequence>MNKFKYTLAIIKPDILVKQNQNVDKIINKIESKFIIHQRKQIKLSLEEAEQFYKDHRGKFFYERLISFMTRGDIIPLILSDKSLEINNNNNNNNNNTSIKPWRDFIGPTHRDKAREQIGCLRGEYGTSDTRNAFHGSGSEEEAIDEINFFFPHFLENNKK</sequence>
<evidence type="ECO:0000250" key="1"/>
<evidence type="ECO:0000305" key="2"/>
<proteinExistence type="inferred from homology"/>
<feature type="chain" id="PRO_0000364032" description="Probable nucleoside diphosphate kinase DDB_G0292928">
    <location>
        <begin position="1"/>
        <end position="160"/>
    </location>
</feature>
<feature type="active site" description="Pros-phosphohistidine intermediate" evidence="1">
    <location>
        <position position="135"/>
    </location>
</feature>
<feature type="binding site" evidence="1">
    <location>
        <position position="12"/>
    </location>
    <ligand>
        <name>ATP</name>
        <dbReference type="ChEBI" id="CHEBI:30616"/>
    </ligand>
</feature>
<feature type="binding site" evidence="1">
    <location>
        <position position="61"/>
    </location>
    <ligand>
        <name>ATP</name>
        <dbReference type="ChEBI" id="CHEBI:30616"/>
    </ligand>
</feature>
<feature type="binding site" evidence="1">
    <location>
        <position position="103"/>
    </location>
    <ligand>
        <name>ATP</name>
        <dbReference type="ChEBI" id="CHEBI:30616"/>
    </ligand>
</feature>
<feature type="binding site" evidence="1">
    <location>
        <position position="109"/>
    </location>
    <ligand>
        <name>ATP</name>
        <dbReference type="ChEBI" id="CHEBI:30616"/>
    </ligand>
</feature>
<feature type="binding site" evidence="1">
    <location>
        <position position="122"/>
    </location>
    <ligand>
        <name>ATP</name>
        <dbReference type="ChEBI" id="CHEBI:30616"/>
    </ligand>
</feature>
<feature type="binding site" evidence="1">
    <location>
        <position position="132"/>
    </location>
    <ligand>
        <name>ATP</name>
        <dbReference type="ChEBI" id="CHEBI:30616"/>
    </ligand>
</feature>
<gene>
    <name type="ORF">DDB_G0292928</name>
</gene>
<name>Y2928_DICDI</name>
<comment type="catalytic activity">
    <reaction>
        <text>a 2'-deoxyribonucleoside 5'-diphosphate + ATP = a 2'-deoxyribonucleoside 5'-triphosphate + ADP</text>
        <dbReference type="Rhea" id="RHEA:44640"/>
        <dbReference type="ChEBI" id="CHEBI:30616"/>
        <dbReference type="ChEBI" id="CHEBI:61560"/>
        <dbReference type="ChEBI" id="CHEBI:73316"/>
        <dbReference type="ChEBI" id="CHEBI:456216"/>
        <dbReference type="EC" id="2.7.4.6"/>
    </reaction>
</comment>
<comment type="catalytic activity">
    <reaction>
        <text>a ribonucleoside 5'-diphosphate + ATP = a ribonucleoside 5'-triphosphate + ADP</text>
        <dbReference type="Rhea" id="RHEA:18113"/>
        <dbReference type="ChEBI" id="CHEBI:30616"/>
        <dbReference type="ChEBI" id="CHEBI:57930"/>
        <dbReference type="ChEBI" id="CHEBI:61557"/>
        <dbReference type="ChEBI" id="CHEBI:456216"/>
        <dbReference type="EC" id="2.7.4.6"/>
    </reaction>
</comment>
<comment type="cofactor">
    <cofactor evidence="1">
        <name>Mg(2+)</name>
        <dbReference type="ChEBI" id="CHEBI:18420"/>
    </cofactor>
</comment>
<comment type="similarity">
    <text evidence="2">Belongs to the NDK family.</text>
</comment>
<dbReference type="EC" id="2.7.4.6"/>
<dbReference type="EMBL" id="AAFI02000197">
    <property type="protein sequence ID" value="EAL61013.1"/>
    <property type="molecule type" value="Genomic_DNA"/>
</dbReference>
<dbReference type="RefSeq" id="XP_629447.1">
    <property type="nucleotide sequence ID" value="XM_629445.1"/>
</dbReference>
<dbReference type="SMR" id="Q54CG9"/>
<dbReference type="FunCoup" id="Q54CG9">
    <property type="interactions" value="196"/>
</dbReference>
<dbReference type="STRING" id="44689.Q54CG9"/>
<dbReference type="PaxDb" id="44689-DDB0191701"/>
<dbReference type="EnsemblProtists" id="EAL61013">
    <property type="protein sequence ID" value="EAL61013"/>
    <property type="gene ID" value="DDB_G0292928"/>
</dbReference>
<dbReference type="GeneID" id="8628966"/>
<dbReference type="KEGG" id="ddi:DDB_G0292928"/>
<dbReference type="dictyBase" id="DDB_G0292928"/>
<dbReference type="VEuPathDB" id="AmoebaDB:DDB_G0292928"/>
<dbReference type="eggNOG" id="KOG0888">
    <property type="taxonomic scope" value="Eukaryota"/>
</dbReference>
<dbReference type="HOGENOM" id="CLU_060216_8_0_1"/>
<dbReference type="InParanoid" id="Q54CG9"/>
<dbReference type="OMA" id="WRKEECQ"/>
<dbReference type="PhylomeDB" id="Q54CG9"/>
<dbReference type="PRO" id="PR:Q54CG9"/>
<dbReference type="Proteomes" id="UP000002195">
    <property type="component" value="Chromosome 6"/>
</dbReference>
<dbReference type="GO" id="GO:0005524">
    <property type="term" value="F:ATP binding"/>
    <property type="evidence" value="ECO:0007669"/>
    <property type="project" value="UniProtKB-KW"/>
</dbReference>
<dbReference type="GO" id="GO:0046872">
    <property type="term" value="F:metal ion binding"/>
    <property type="evidence" value="ECO:0007669"/>
    <property type="project" value="UniProtKB-KW"/>
</dbReference>
<dbReference type="GO" id="GO:0004550">
    <property type="term" value="F:nucleoside diphosphate kinase activity"/>
    <property type="evidence" value="ECO:0007669"/>
    <property type="project" value="UniProtKB-EC"/>
</dbReference>
<dbReference type="GO" id="GO:0009117">
    <property type="term" value="P:nucleotide metabolic process"/>
    <property type="evidence" value="ECO:0007669"/>
    <property type="project" value="UniProtKB-KW"/>
</dbReference>
<dbReference type="Gene3D" id="3.30.70.141">
    <property type="entry name" value="Nucleoside diphosphate kinase-like domain"/>
    <property type="match status" value="1"/>
</dbReference>
<dbReference type="InterPro" id="IPR034907">
    <property type="entry name" value="NDK-like_dom"/>
</dbReference>
<dbReference type="InterPro" id="IPR036850">
    <property type="entry name" value="NDK-like_dom_sf"/>
</dbReference>
<dbReference type="PANTHER" id="PTHR46161">
    <property type="entry name" value="NUCLEOSIDE DIPHOSPHATE KINASE"/>
    <property type="match status" value="1"/>
</dbReference>
<dbReference type="PANTHER" id="PTHR46161:SF3">
    <property type="entry name" value="NUCLEOSIDE DIPHOSPHATE KINASE DDB_G0292928-RELATED"/>
    <property type="match status" value="1"/>
</dbReference>
<dbReference type="Pfam" id="PF00334">
    <property type="entry name" value="NDK"/>
    <property type="match status" value="1"/>
</dbReference>
<dbReference type="SMART" id="SM00562">
    <property type="entry name" value="NDK"/>
    <property type="match status" value="1"/>
</dbReference>
<dbReference type="SUPFAM" id="SSF54919">
    <property type="entry name" value="Nucleoside diphosphate kinase, NDK"/>
    <property type="match status" value="1"/>
</dbReference>
<dbReference type="PROSITE" id="PS51374">
    <property type="entry name" value="NDPK_LIKE"/>
    <property type="match status" value="1"/>
</dbReference>
<reference key="1">
    <citation type="journal article" date="2005" name="Nature">
        <title>The genome of the social amoeba Dictyostelium discoideum.</title>
        <authorList>
            <person name="Eichinger L."/>
            <person name="Pachebat J.A."/>
            <person name="Gloeckner G."/>
            <person name="Rajandream M.A."/>
            <person name="Sucgang R."/>
            <person name="Berriman M."/>
            <person name="Song J."/>
            <person name="Olsen R."/>
            <person name="Szafranski K."/>
            <person name="Xu Q."/>
            <person name="Tunggal B."/>
            <person name="Kummerfeld S."/>
            <person name="Madera M."/>
            <person name="Konfortov B.A."/>
            <person name="Rivero F."/>
            <person name="Bankier A.T."/>
            <person name="Lehmann R."/>
            <person name="Hamlin N."/>
            <person name="Davies R."/>
            <person name="Gaudet P."/>
            <person name="Fey P."/>
            <person name="Pilcher K."/>
            <person name="Chen G."/>
            <person name="Saunders D."/>
            <person name="Sodergren E.J."/>
            <person name="Davis P."/>
            <person name="Kerhornou A."/>
            <person name="Nie X."/>
            <person name="Hall N."/>
            <person name="Anjard C."/>
            <person name="Hemphill L."/>
            <person name="Bason N."/>
            <person name="Farbrother P."/>
            <person name="Desany B."/>
            <person name="Just E."/>
            <person name="Morio T."/>
            <person name="Rost R."/>
            <person name="Churcher C.M."/>
            <person name="Cooper J."/>
            <person name="Haydock S."/>
            <person name="van Driessche N."/>
            <person name="Cronin A."/>
            <person name="Goodhead I."/>
            <person name="Muzny D.M."/>
            <person name="Mourier T."/>
            <person name="Pain A."/>
            <person name="Lu M."/>
            <person name="Harper D."/>
            <person name="Lindsay R."/>
            <person name="Hauser H."/>
            <person name="James K.D."/>
            <person name="Quiles M."/>
            <person name="Madan Babu M."/>
            <person name="Saito T."/>
            <person name="Buchrieser C."/>
            <person name="Wardroper A."/>
            <person name="Felder M."/>
            <person name="Thangavelu M."/>
            <person name="Johnson D."/>
            <person name="Knights A."/>
            <person name="Loulseged H."/>
            <person name="Mungall K.L."/>
            <person name="Oliver K."/>
            <person name="Price C."/>
            <person name="Quail M.A."/>
            <person name="Urushihara H."/>
            <person name="Hernandez J."/>
            <person name="Rabbinowitsch E."/>
            <person name="Steffen D."/>
            <person name="Sanders M."/>
            <person name="Ma J."/>
            <person name="Kohara Y."/>
            <person name="Sharp S."/>
            <person name="Simmonds M.N."/>
            <person name="Spiegler S."/>
            <person name="Tivey A."/>
            <person name="Sugano S."/>
            <person name="White B."/>
            <person name="Walker D."/>
            <person name="Woodward J.R."/>
            <person name="Winckler T."/>
            <person name="Tanaka Y."/>
            <person name="Shaulsky G."/>
            <person name="Schleicher M."/>
            <person name="Weinstock G.M."/>
            <person name="Rosenthal A."/>
            <person name="Cox E.C."/>
            <person name="Chisholm R.L."/>
            <person name="Gibbs R.A."/>
            <person name="Loomis W.F."/>
            <person name="Platzer M."/>
            <person name="Kay R.R."/>
            <person name="Williams J.G."/>
            <person name="Dear P.H."/>
            <person name="Noegel A.A."/>
            <person name="Barrell B.G."/>
            <person name="Kuspa A."/>
        </authorList>
    </citation>
    <scope>NUCLEOTIDE SEQUENCE [LARGE SCALE GENOMIC DNA]</scope>
    <source>
        <strain>AX4</strain>
    </source>
</reference>
<organism>
    <name type="scientific">Dictyostelium discoideum</name>
    <name type="common">Social amoeba</name>
    <dbReference type="NCBI Taxonomy" id="44689"/>
    <lineage>
        <taxon>Eukaryota</taxon>
        <taxon>Amoebozoa</taxon>
        <taxon>Evosea</taxon>
        <taxon>Eumycetozoa</taxon>
        <taxon>Dictyostelia</taxon>
        <taxon>Dictyosteliales</taxon>
        <taxon>Dictyosteliaceae</taxon>
        <taxon>Dictyostelium</taxon>
    </lineage>
</organism>
<accession>Q54CG9</accession>
<protein>
    <recommendedName>
        <fullName>Probable nucleoside diphosphate kinase DDB_G0292928</fullName>
        <ecNumber>2.7.4.6</ecNumber>
    </recommendedName>
</protein>
<keyword id="KW-0067">ATP-binding</keyword>
<keyword id="KW-0418">Kinase</keyword>
<keyword id="KW-0460">Magnesium</keyword>
<keyword id="KW-0479">Metal-binding</keyword>
<keyword id="KW-0546">Nucleotide metabolism</keyword>
<keyword id="KW-0547">Nucleotide-binding</keyword>
<keyword id="KW-0597">Phosphoprotein</keyword>
<keyword id="KW-1185">Reference proteome</keyword>
<keyword id="KW-0808">Transferase</keyword>